<comment type="function">
    <text evidence="1">Negatively regulates transcription of bacterial ribonucleotide reductase nrd genes and operons by binding to NrdR-boxes.</text>
</comment>
<comment type="cofactor">
    <cofactor evidence="1">
        <name>Zn(2+)</name>
        <dbReference type="ChEBI" id="CHEBI:29105"/>
    </cofactor>
    <text evidence="1">Binds 1 zinc ion.</text>
</comment>
<comment type="similarity">
    <text evidence="1">Belongs to the NrdR family.</text>
</comment>
<comment type="sequence caution" evidence="2">
    <conflict type="erroneous initiation">
        <sequence resource="EMBL-CDS" id="AAO35704"/>
    </conflict>
</comment>
<organism>
    <name type="scientific">Clostridium tetani (strain Massachusetts / E88)</name>
    <dbReference type="NCBI Taxonomy" id="212717"/>
    <lineage>
        <taxon>Bacteria</taxon>
        <taxon>Bacillati</taxon>
        <taxon>Bacillota</taxon>
        <taxon>Clostridia</taxon>
        <taxon>Eubacteriales</taxon>
        <taxon>Clostridiaceae</taxon>
        <taxon>Clostridium</taxon>
    </lineage>
</organism>
<evidence type="ECO:0000255" key="1">
    <source>
        <dbReference type="HAMAP-Rule" id="MF_00440"/>
    </source>
</evidence>
<evidence type="ECO:0000305" key="2"/>
<keyword id="KW-0067">ATP-binding</keyword>
<keyword id="KW-0238">DNA-binding</keyword>
<keyword id="KW-0479">Metal-binding</keyword>
<keyword id="KW-0547">Nucleotide-binding</keyword>
<keyword id="KW-1185">Reference proteome</keyword>
<keyword id="KW-0678">Repressor</keyword>
<keyword id="KW-0804">Transcription</keyword>
<keyword id="KW-0805">Transcription regulation</keyword>
<keyword id="KW-0862">Zinc</keyword>
<keyword id="KW-0863">Zinc-finger</keyword>
<sequence>MKCPYCSYNESKVVDSRSTEDSISIRRRRECLECGKRYTTYEKIESVPILVIKKNLNREYFDRDKIVNGMIKACQKRPVSRQQIEEIVDEIEKKINNSMITEVKSEYIGELIMEKLKDIDEVSYVRFASVYRQFKDINTFMEEIKKLKDREL</sequence>
<name>NRDR_CLOTE</name>
<reference key="1">
    <citation type="journal article" date="2003" name="Proc. Natl. Acad. Sci. U.S.A.">
        <title>The genome sequence of Clostridium tetani, the causative agent of tetanus disease.</title>
        <authorList>
            <person name="Brueggemann H."/>
            <person name="Baeumer S."/>
            <person name="Fricke W.F."/>
            <person name="Wiezer A."/>
            <person name="Liesegang H."/>
            <person name="Decker I."/>
            <person name="Herzberg C."/>
            <person name="Martinez-Arias R."/>
            <person name="Merkl R."/>
            <person name="Henne A."/>
            <person name="Gottschalk G."/>
        </authorList>
    </citation>
    <scope>NUCLEOTIDE SEQUENCE [LARGE SCALE GENOMIC DNA]</scope>
    <source>
        <strain>Massachusetts / E88</strain>
    </source>
</reference>
<protein>
    <recommendedName>
        <fullName evidence="1">Transcriptional repressor NrdR</fullName>
    </recommendedName>
</protein>
<feature type="chain" id="PRO_0000182287" description="Transcriptional repressor NrdR">
    <location>
        <begin position="1"/>
        <end position="152"/>
    </location>
</feature>
<feature type="domain" description="ATP-cone" evidence="1">
    <location>
        <begin position="49"/>
        <end position="139"/>
    </location>
</feature>
<feature type="zinc finger region" evidence="1">
    <location>
        <begin position="3"/>
        <end position="34"/>
    </location>
</feature>
<gene>
    <name evidence="1" type="primary">nrdR</name>
    <name type="ordered locus">CTC_01129</name>
</gene>
<proteinExistence type="inferred from homology"/>
<dbReference type="EMBL" id="AE015927">
    <property type="protein sequence ID" value="AAO35704.1"/>
    <property type="status" value="ALT_INIT"/>
    <property type="molecule type" value="Genomic_DNA"/>
</dbReference>
<dbReference type="RefSeq" id="WP_011099366.1">
    <property type="nucleotide sequence ID" value="NC_004557.1"/>
</dbReference>
<dbReference type="SMR" id="Q895Y6"/>
<dbReference type="STRING" id="212717.CTC_01129"/>
<dbReference type="GeneID" id="24254286"/>
<dbReference type="KEGG" id="ctc:CTC_01129"/>
<dbReference type="HOGENOM" id="CLU_108412_0_0_9"/>
<dbReference type="OrthoDB" id="9807461at2"/>
<dbReference type="Proteomes" id="UP000001412">
    <property type="component" value="Chromosome"/>
</dbReference>
<dbReference type="GO" id="GO:0005524">
    <property type="term" value="F:ATP binding"/>
    <property type="evidence" value="ECO:0007669"/>
    <property type="project" value="UniProtKB-KW"/>
</dbReference>
<dbReference type="GO" id="GO:0003677">
    <property type="term" value="F:DNA binding"/>
    <property type="evidence" value="ECO:0007669"/>
    <property type="project" value="UniProtKB-KW"/>
</dbReference>
<dbReference type="GO" id="GO:0008270">
    <property type="term" value="F:zinc ion binding"/>
    <property type="evidence" value="ECO:0007669"/>
    <property type="project" value="UniProtKB-UniRule"/>
</dbReference>
<dbReference type="GO" id="GO:0045892">
    <property type="term" value="P:negative regulation of DNA-templated transcription"/>
    <property type="evidence" value="ECO:0007669"/>
    <property type="project" value="UniProtKB-UniRule"/>
</dbReference>
<dbReference type="HAMAP" id="MF_00440">
    <property type="entry name" value="NrdR"/>
    <property type="match status" value="1"/>
</dbReference>
<dbReference type="InterPro" id="IPR005144">
    <property type="entry name" value="ATP-cone_dom"/>
</dbReference>
<dbReference type="InterPro" id="IPR055173">
    <property type="entry name" value="NrdR-like_N"/>
</dbReference>
<dbReference type="InterPro" id="IPR003796">
    <property type="entry name" value="RNR_NrdR-like"/>
</dbReference>
<dbReference type="NCBIfam" id="TIGR00244">
    <property type="entry name" value="transcriptional regulator NrdR"/>
    <property type="match status" value="1"/>
</dbReference>
<dbReference type="PANTHER" id="PTHR30455">
    <property type="entry name" value="TRANSCRIPTIONAL REPRESSOR NRDR"/>
    <property type="match status" value="1"/>
</dbReference>
<dbReference type="PANTHER" id="PTHR30455:SF2">
    <property type="entry name" value="TRANSCRIPTIONAL REPRESSOR NRDR"/>
    <property type="match status" value="1"/>
</dbReference>
<dbReference type="Pfam" id="PF03477">
    <property type="entry name" value="ATP-cone"/>
    <property type="match status" value="1"/>
</dbReference>
<dbReference type="Pfam" id="PF22811">
    <property type="entry name" value="Zn_ribbon_NrdR"/>
    <property type="match status" value="1"/>
</dbReference>
<dbReference type="PROSITE" id="PS51161">
    <property type="entry name" value="ATP_CONE"/>
    <property type="match status" value="1"/>
</dbReference>
<accession>Q895Y6</accession>